<comment type="function">
    <text evidence="1">Catalyzes the acyloin condensation reaction between C atoms 2 and 3 of pyruvate and glyceraldehyde 3-phosphate to yield 1-deoxy-D-xylulose-5-phosphate (DXP).</text>
</comment>
<comment type="catalytic activity">
    <reaction evidence="1">
        <text>D-glyceraldehyde 3-phosphate + pyruvate + H(+) = 1-deoxy-D-xylulose 5-phosphate + CO2</text>
        <dbReference type="Rhea" id="RHEA:12605"/>
        <dbReference type="ChEBI" id="CHEBI:15361"/>
        <dbReference type="ChEBI" id="CHEBI:15378"/>
        <dbReference type="ChEBI" id="CHEBI:16526"/>
        <dbReference type="ChEBI" id="CHEBI:57792"/>
        <dbReference type="ChEBI" id="CHEBI:59776"/>
        <dbReference type="EC" id="2.2.1.7"/>
    </reaction>
</comment>
<comment type="cofactor">
    <cofactor evidence="1">
        <name>Mg(2+)</name>
        <dbReference type="ChEBI" id="CHEBI:18420"/>
    </cofactor>
    <text evidence="1">Binds 1 Mg(2+) ion per subunit.</text>
</comment>
<comment type="cofactor">
    <cofactor evidence="1">
        <name>thiamine diphosphate</name>
        <dbReference type="ChEBI" id="CHEBI:58937"/>
    </cofactor>
    <text evidence="1">Binds 1 thiamine pyrophosphate per subunit.</text>
</comment>
<comment type="pathway">
    <text evidence="1">Metabolic intermediate biosynthesis; 1-deoxy-D-xylulose 5-phosphate biosynthesis; 1-deoxy-D-xylulose 5-phosphate from D-glyceraldehyde 3-phosphate and pyruvate: step 1/1.</text>
</comment>
<comment type="subunit">
    <text evidence="1">Homodimer.</text>
</comment>
<comment type="similarity">
    <text evidence="1">Belongs to the transketolase family. DXPS subfamily.</text>
</comment>
<evidence type="ECO:0000255" key="1">
    <source>
        <dbReference type="HAMAP-Rule" id="MF_00315"/>
    </source>
</evidence>
<feature type="chain" id="PRO_1000019088" description="1-deoxy-D-xylulose-5-phosphate synthase">
    <location>
        <begin position="1"/>
        <end position="608"/>
    </location>
</feature>
<feature type="binding site" evidence="1">
    <location>
        <position position="66"/>
    </location>
    <ligand>
        <name>thiamine diphosphate</name>
        <dbReference type="ChEBI" id="CHEBI:58937"/>
    </ligand>
</feature>
<feature type="binding site" evidence="1">
    <location>
        <begin position="107"/>
        <end position="109"/>
    </location>
    <ligand>
        <name>thiamine diphosphate</name>
        <dbReference type="ChEBI" id="CHEBI:58937"/>
    </ligand>
</feature>
<feature type="binding site" evidence="1">
    <location>
        <position position="138"/>
    </location>
    <ligand>
        <name>Mg(2+)</name>
        <dbReference type="ChEBI" id="CHEBI:18420"/>
    </ligand>
</feature>
<feature type="binding site" evidence="1">
    <location>
        <begin position="139"/>
        <end position="140"/>
    </location>
    <ligand>
        <name>thiamine diphosphate</name>
        <dbReference type="ChEBI" id="CHEBI:58937"/>
    </ligand>
</feature>
<feature type="binding site" evidence="1">
    <location>
        <position position="167"/>
    </location>
    <ligand>
        <name>Mg(2+)</name>
        <dbReference type="ChEBI" id="CHEBI:18420"/>
    </ligand>
</feature>
<feature type="binding site" evidence="1">
    <location>
        <position position="167"/>
    </location>
    <ligand>
        <name>thiamine diphosphate</name>
        <dbReference type="ChEBI" id="CHEBI:58937"/>
    </ligand>
</feature>
<feature type="binding site" evidence="1">
    <location>
        <position position="277"/>
    </location>
    <ligand>
        <name>thiamine diphosphate</name>
        <dbReference type="ChEBI" id="CHEBI:58937"/>
    </ligand>
</feature>
<feature type="binding site" evidence="1">
    <location>
        <position position="350"/>
    </location>
    <ligand>
        <name>thiamine diphosphate</name>
        <dbReference type="ChEBI" id="CHEBI:58937"/>
    </ligand>
</feature>
<accession>A5ILK2</accession>
<keyword id="KW-0414">Isoprene biosynthesis</keyword>
<keyword id="KW-0460">Magnesium</keyword>
<keyword id="KW-0479">Metal-binding</keyword>
<keyword id="KW-0784">Thiamine biosynthesis</keyword>
<keyword id="KW-0786">Thiamine pyrophosphate</keyword>
<keyword id="KW-0808">Transferase</keyword>
<sequence length="608" mass="67436">MLLDEIKRMSYDELKRLAEDIRKKITEVVLKNGGHLASNLGTIELTLALYRVFDPREDAIIWDTGHQAYTHKILTGRDELFHTIRTFGGLSGFVTRRESPLDWFGTGHAGTSIAAGLGFEKAFELLGEKRHVVVVIGDGALTSGMALEALNQLKNINSKMKIILNDNGMSISPNVGGLAYHLSKLRTSPIYLKGKKVLKEVLEKTEIGFEVEEEMKYLRDSLKGMIQGTNFFESLGLKYFGPFDGHNIELLEKVFKRIRDYDYPSVIHVVTKKGKGFTAAEEDPTKYHSAPPSEKPKMLSYSELLGYTLSRIAREDKKIVAITAAMADGTGLSIFQKEHPDRFFDLGITEQTCVTFGAALGLHGMKPVVAIYSTFLQRAYDQIVHDVALQNAPVLFAIDKSGVVGEDGPTHHGLFDINYLLPVPNMKIISPSSPEEFVSSLYTILKNLDGPVAIRYPKESFYGEVESILENMKKIDLGWKILRRGKEAAIIATGTILNEVLKIPLDVTVVNALTVKPLDTAVLKEIARDHDIIITVEEAMRIGGFGSFVAQRLQEMGWQGKIVNVGVEDLFVPHGGRKELLSTLGLDSEGLTKTVLTYIKARSREGKV</sequence>
<proteinExistence type="inferred from homology"/>
<organism>
    <name type="scientific">Thermotoga petrophila (strain ATCC BAA-488 / DSM 13995 / JCM 10881 / RKU-1)</name>
    <dbReference type="NCBI Taxonomy" id="390874"/>
    <lineage>
        <taxon>Bacteria</taxon>
        <taxon>Thermotogati</taxon>
        <taxon>Thermotogota</taxon>
        <taxon>Thermotogae</taxon>
        <taxon>Thermotogales</taxon>
        <taxon>Thermotogaceae</taxon>
        <taxon>Thermotoga</taxon>
    </lineage>
</organism>
<reference key="1">
    <citation type="submission" date="2007-05" db="EMBL/GenBank/DDBJ databases">
        <title>Complete sequence of Thermotoga petrophila RKU-1.</title>
        <authorList>
            <consortium name="US DOE Joint Genome Institute"/>
            <person name="Copeland A."/>
            <person name="Lucas S."/>
            <person name="Lapidus A."/>
            <person name="Barry K."/>
            <person name="Glavina del Rio T."/>
            <person name="Dalin E."/>
            <person name="Tice H."/>
            <person name="Pitluck S."/>
            <person name="Sims D."/>
            <person name="Brettin T."/>
            <person name="Bruce D."/>
            <person name="Detter J.C."/>
            <person name="Han C."/>
            <person name="Tapia R."/>
            <person name="Schmutz J."/>
            <person name="Larimer F."/>
            <person name="Land M."/>
            <person name="Hauser L."/>
            <person name="Kyrpides N."/>
            <person name="Mikhailova N."/>
            <person name="Nelson K."/>
            <person name="Gogarten J.P."/>
            <person name="Noll K."/>
            <person name="Richardson P."/>
        </authorList>
    </citation>
    <scope>NUCLEOTIDE SEQUENCE [LARGE SCALE GENOMIC DNA]</scope>
    <source>
        <strain>ATCC BAA-488 / DSM 13995 / JCM 10881 / RKU-1</strain>
    </source>
</reference>
<dbReference type="EC" id="2.2.1.7" evidence="1"/>
<dbReference type="EMBL" id="CP000702">
    <property type="protein sequence ID" value="ABQ47075.1"/>
    <property type="molecule type" value="Genomic_DNA"/>
</dbReference>
<dbReference type="RefSeq" id="WP_011943604.1">
    <property type="nucleotide sequence ID" value="NC_009486.1"/>
</dbReference>
<dbReference type="SMR" id="A5ILK2"/>
<dbReference type="STRING" id="390874.Tpet_1058"/>
<dbReference type="KEGG" id="tpt:Tpet_1058"/>
<dbReference type="eggNOG" id="COG1154">
    <property type="taxonomic scope" value="Bacteria"/>
</dbReference>
<dbReference type="HOGENOM" id="CLU_009227_1_4_0"/>
<dbReference type="UniPathway" id="UPA00064">
    <property type="reaction ID" value="UER00091"/>
</dbReference>
<dbReference type="Proteomes" id="UP000006558">
    <property type="component" value="Chromosome"/>
</dbReference>
<dbReference type="GO" id="GO:0005829">
    <property type="term" value="C:cytosol"/>
    <property type="evidence" value="ECO:0007669"/>
    <property type="project" value="TreeGrafter"/>
</dbReference>
<dbReference type="GO" id="GO:0008661">
    <property type="term" value="F:1-deoxy-D-xylulose-5-phosphate synthase activity"/>
    <property type="evidence" value="ECO:0007669"/>
    <property type="project" value="UniProtKB-UniRule"/>
</dbReference>
<dbReference type="GO" id="GO:0000287">
    <property type="term" value="F:magnesium ion binding"/>
    <property type="evidence" value="ECO:0007669"/>
    <property type="project" value="UniProtKB-UniRule"/>
</dbReference>
<dbReference type="GO" id="GO:0030976">
    <property type="term" value="F:thiamine pyrophosphate binding"/>
    <property type="evidence" value="ECO:0007669"/>
    <property type="project" value="UniProtKB-UniRule"/>
</dbReference>
<dbReference type="GO" id="GO:0052865">
    <property type="term" value="P:1-deoxy-D-xylulose 5-phosphate biosynthetic process"/>
    <property type="evidence" value="ECO:0007669"/>
    <property type="project" value="UniProtKB-UniPathway"/>
</dbReference>
<dbReference type="GO" id="GO:0019288">
    <property type="term" value="P:isopentenyl diphosphate biosynthetic process, methylerythritol 4-phosphate pathway"/>
    <property type="evidence" value="ECO:0007669"/>
    <property type="project" value="TreeGrafter"/>
</dbReference>
<dbReference type="GO" id="GO:0016114">
    <property type="term" value="P:terpenoid biosynthetic process"/>
    <property type="evidence" value="ECO:0007669"/>
    <property type="project" value="UniProtKB-UniRule"/>
</dbReference>
<dbReference type="GO" id="GO:0009228">
    <property type="term" value="P:thiamine biosynthetic process"/>
    <property type="evidence" value="ECO:0007669"/>
    <property type="project" value="UniProtKB-UniRule"/>
</dbReference>
<dbReference type="CDD" id="cd02007">
    <property type="entry name" value="TPP_DXS"/>
    <property type="match status" value="1"/>
</dbReference>
<dbReference type="CDD" id="cd07033">
    <property type="entry name" value="TPP_PYR_DXS_TK_like"/>
    <property type="match status" value="1"/>
</dbReference>
<dbReference type="FunFam" id="3.40.50.970:FF:000005">
    <property type="entry name" value="1-deoxy-D-xylulose-5-phosphate synthase"/>
    <property type="match status" value="1"/>
</dbReference>
<dbReference type="Gene3D" id="3.40.50.920">
    <property type="match status" value="1"/>
</dbReference>
<dbReference type="Gene3D" id="3.40.50.970">
    <property type="match status" value="2"/>
</dbReference>
<dbReference type="HAMAP" id="MF_00315">
    <property type="entry name" value="DXP_synth"/>
    <property type="match status" value="1"/>
</dbReference>
<dbReference type="InterPro" id="IPR005477">
    <property type="entry name" value="Dxylulose-5-P_synthase"/>
</dbReference>
<dbReference type="InterPro" id="IPR029061">
    <property type="entry name" value="THDP-binding"/>
</dbReference>
<dbReference type="InterPro" id="IPR009014">
    <property type="entry name" value="Transketo_C/PFOR_II"/>
</dbReference>
<dbReference type="InterPro" id="IPR005475">
    <property type="entry name" value="Transketolase-like_Pyr-bd"/>
</dbReference>
<dbReference type="InterPro" id="IPR033248">
    <property type="entry name" value="Transketolase_C"/>
</dbReference>
<dbReference type="InterPro" id="IPR049557">
    <property type="entry name" value="Transketolase_CS"/>
</dbReference>
<dbReference type="NCBIfam" id="TIGR00204">
    <property type="entry name" value="dxs"/>
    <property type="match status" value="1"/>
</dbReference>
<dbReference type="NCBIfam" id="NF003933">
    <property type="entry name" value="PRK05444.2-2"/>
    <property type="match status" value="1"/>
</dbReference>
<dbReference type="PANTHER" id="PTHR43322">
    <property type="entry name" value="1-D-DEOXYXYLULOSE 5-PHOSPHATE SYNTHASE-RELATED"/>
    <property type="match status" value="1"/>
</dbReference>
<dbReference type="PANTHER" id="PTHR43322:SF5">
    <property type="entry name" value="1-DEOXY-D-XYLULOSE-5-PHOSPHATE SYNTHASE, CHLOROPLASTIC"/>
    <property type="match status" value="1"/>
</dbReference>
<dbReference type="Pfam" id="PF13292">
    <property type="entry name" value="DXP_synthase_N"/>
    <property type="match status" value="1"/>
</dbReference>
<dbReference type="Pfam" id="PF02779">
    <property type="entry name" value="Transket_pyr"/>
    <property type="match status" value="1"/>
</dbReference>
<dbReference type="Pfam" id="PF02780">
    <property type="entry name" value="Transketolase_C"/>
    <property type="match status" value="1"/>
</dbReference>
<dbReference type="SMART" id="SM00861">
    <property type="entry name" value="Transket_pyr"/>
    <property type="match status" value="1"/>
</dbReference>
<dbReference type="SUPFAM" id="SSF52518">
    <property type="entry name" value="Thiamin diphosphate-binding fold (THDP-binding)"/>
    <property type="match status" value="2"/>
</dbReference>
<dbReference type="SUPFAM" id="SSF52922">
    <property type="entry name" value="TK C-terminal domain-like"/>
    <property type="match status" value="1"/>
</dbReference>
<dbReference type="PROSITE" id="PS00801">
    <property type="entry name" value="TRANSKETOLASE_1"/>
    <property type="match status" value="1"/>
</dbReference>
<gene>
    <name evidence="1" type="primary">dxs</name>
    <name type="ordered locus">Tpet_1058</name>
</gene>
<protein>
    <recommendedName>
        <fullName evidence="1">1-deoxy-D-xylulose-5-phosphate synthase</fullName>
        <ecNumber evidence="1">2.2.1.7</ecNumber>
    </recommendedName>
    <alternativeName>
        <fullName evidence="1">1-deoxyxylulose-5-phosphate synthase</fullName>
        <shortName evidence="1">DXP synthase</shortName>
        <shortName evidence="1">DXPS</shortName>
    </alternativeName>
</protein>
<name>DXS_THEP1</name>